<proteinExistence type="evidence at transcript level"/>
<accession>O43100</accession>
<accession>C8V9H8</accession>
<accession>Q541P5</accession>
<accession>Q5AS79</accession>
<reference key="1">
    <citation type="submission" date="1998-01" db="EMBL/GenBank/DDBJ databases">
        <title>A highly conserved nucleolar protein Cbf5p may be involved in the centromere DNA-binding activity of protein complex CBF3.</title>
        <authorList>
            <person name="Jiang W."/>
            <person name="Clifford J."/>
            <person name="Koltin Y."/>
        </authorList>
    </citation>
    <scope>NUCLEOTIDE SEQUENCE [MRNA]</scope>
</reference>
<reference key="2">
    <citation type="journal article" date="2003" name="Genetics">
        <title>The Aspergillus nidulans swoC1 mutant shows defects in growth and development.</title>
        <authorList>
            <person name="Lin X."/>
            <person name="Momany M."/>
        </authorList>
    </citation>
    <scope>NUCLEOTIDE SEQUENCE [GENOMIC DNA]</scope>
</reference>
<reference key="3">
    <citation type="journal article" date="2005" name="Nature">
        <title>Sequencing of Aspergillus nidulans and comparative analysis with A. fumigatus and A. oryzae.</title>
        <authorList>
            <person name="Galagan J.E."/>
            <person name="Calvo S.E."/>
            <person name="Cuomo C."/>
            <person name="Ma L.-J."/>
            <person name="Wortman J.R."/>
            <person name="Batzoglou S."/>
            <person name="Lee S.-I."/>
            <person name="Bastuerkmen M."/>
            <person name="Spevak C.C."/>
            <person name="Clutterbuck J."/>
            <person name="Kapitonov V."/>
            <person name="Jurka J."/>
            <person name="Scazzocchio C."/>
            <person name="Farman M.L."/>
            <person name="Butler J."/>
            <person name="Purcell S."/>
            <person name="Harris S."/>
            <person name="Braus G.H."/>
            <person name="Draht O."/>
            <person name="Busch S."/>
            <person name="D'Enfert C."/>
            <person name="Bouchier C."/>
            <person name="Goldman G.H."/>
            <person name="Bell-Pedersen D."/>
            <person name="Griffiths-Jones S."/>
            <person name="Doonan J.H."/>
            <person name="Yu J."/>
            <person name="Vienken K."/>
            <person name="Pain A."/>
            <person name="Freitag M."/>
            <person name="Selker E.U."/>
            <person name="Archer D.B."/>
            <person name="Penalva M.A."/>
            <person name="Oakley B.R."/>
            <person name="Momany M."/>
            <person name="Tanaka T."/>
            <person name="Kumagai T."/>
            <person name="Asai K."/>
            <person name="Machida M."/>
            <person name="Nierman W.C."/>
            <person name="Denning D.W."/>
            <person name="Caddick M.X."/>
            <person name="Hynes M."/>
            <person name="Paoletti M."/>
            <person name="Fischer R."/>
            <person name="Miller B.L."/>
            <person name="Dyer P.S."/>
            <person name="Sachs M.S."/>
            <person name="Osmani S.A."/>
            <person name="Birren B.W."/>
        </authorList>
    </citation>
    <scope>NUCLEOTIDE SEQUENCE [LARGE SCALE GENOMIC DNA]</scope>
    <source>
        <strain>FGSC A4 / ATCC 38163 / CBS 112.46 / NRRL 194 / M139</strain>
    </source>
</reference>
<reference key="4">
    <citation type="journal article" date="2009" name="Fungal Genet. Biol.">
        <title>The 2008 update of the Aspergillus nidulans genome annotation: a community effort.</title>
        <authorList>
            <person name="Wortman J.R."/>
            <person name="Gilsenan J.M."/>
            <person name="Joardar V."/>
            <person name="Deegan J."/>
            <person name="Clutterbuck J."/>
            <person name="Andersen M.R."/>
            <person name="Archer D."/>
            <person name="Bencina M."/>
            <person name="Braus G."/>
            <person name="Coutinho P."/>
            <person name="von Dohren H."/>
            <person name="Doonan J."/>
            <person name="Driessen A.J."/>
            <person name="Durek P."/>
            <person name="Espeso E."/>
            <person name="Fekete E."/>
            <person name="Flipphi M."/>
            <person name="Estrada C.G."/>
            <person name="Geysens S."/>
            <person name="Goldman G."/>
            <person name="de Groot P.W."/>
            <person name="Hansen K."/>
            <person name="Harris S.D."/>
            <person name="Heinekamp T."/>
            <person name="Helmstaedt K."/>
            <person name="Henrissat B."/>
            <person name="Hofmann G."/>
            <person name="Homan T."/>
            <person name="Horio T."/>
            <person name="Horiuchi H."/>
            <person name="James S."/>
            <person name="Jones M."/>
            <person name="Karaffa L."/>
            <person name="Karanyi Z."/>
            <person name="Kato M."/>
            <person name="Keller N."/>
            <person name="Kelly D.E."/>
            <person name="Kiel J.A."/>
            <person name="Kim J.M."/>
            <person name="van der Klei I.J."/>
            <person name="Klis F.M."/>
            <person name="Kovalchuk A."/>
            <person name="Krasevec N."/>
            <person name="Kubicek C.P."/>
            <person name="Liu B."/>
            <person name="Maccabe A."/>
            <person name="Meyer V."/>
            <person name="Mirabito P."/>
            <person name="Miskei M."/>
            <person name="Mos M."/>
            <person name="Mullins J."/>
            <person name="Nelson D.R."/>
            <person name="Nielsen J."/>
            <person name="Oakley B.R."/>
            <person name="Osmani S.A."/>
            <person name="Pakula T."/>
            <person name="Paszewski A."/>
            <person name="Paulsen I."/>
            <person name="Pilsyk S."/>
            <person name="Pocsi I."/>
            <person name="Punt P.J."/>
            <person name="Ram A.F."/>
            <person name="Ren Q."/>
            <person name="Robellet X."/>
            <person name="Robson G."/>
            <person name="Seiboth B."/>
            <person name="van Solingen P."/>
            <person name="Specht T."/>
            <person name="Sun J."/>
            <person name="Taheri-Talesh N."/>
            <person name="Takeshita N."/>
            <person name="Ussery D."/>
            <person name="vanKuyk P.A."/>
            <person name="Visser H."/>
            <person name="van de Vondervoort P.J."/>
            <person name="de Vries R.P."/>
            <person name="Walton J."/>
            <person name="Xiang X."/>
            <person name="Xiong Y."/>
            <person name="Zeng A.P."/>
            <person name="Brandt B.W."/>
            <person name="Cornell M.J."/>
            <person name="van den Hondel C.A."/>
            <person name="Visser J."/>
            <person name="Oliver S.G."/>
            <person name="Turner G."/>
        </authorList>
    </citation>
    <scope>GENOME REANNOTATION</scope>
    <source>
        <strain>FGSC A4 / ATCC 38163 / CBS 112.46 / NRRL 194 / M139</strain>
    </source>
</reference>
<feature type="chain" id="PRO_0000121979" description="H/ACA ribonucleoprotein complex subunit CBF5">
    <location>
        <begin position="1"/>
        <end position="481"/>
    </location>
</feature>
<feature type="domain" description="PUA" evidence="3">
    <location>
        <begin position="268"/>
        <end position="343"/>
    </location>
</feature>
<feature type="region of interest" description="Disordered" evidence="4">
    <location>
        <begin position="387"/>
        <end position="481"/>
    </location>
</feature>
<feature type="compositionally biased region" description="Basic and acidic residues" evidence="4">
    <location>
        <begin position="406"/>
        <end position="428"/>
    </location>
</feature>
<feature type="compositionally biased region" description="Basic and acidic residues" evidence="4">
    <location>
        <begin position="443"/>
        <end position="453"/>
    </location>
</feature>
<feature type="compositionally biased region" description="Basic residues" evidence="4">
    <location>
        <begin position="454"/>
        <end position="471"/>
    </location>
</feature>
<feature type="active site" description="Nucleophile" evidence="2">
    <location>
        <position position="96"/>
    </location>
</feature>
<sequence>MAKEVDYTIKPEATASNINTEDWPLLLKNYDKLMVRTGHFTPIPAGSSPLKRDLKSYINSGVINLDKPSNPSSHEVVAWMKRILRAEKTGHSGTLDPKVTGCLIVCIDRATRLVKSQQGAGKEYVCVIRLHDKIPGGEAQFKRALETLTGALFQRPPLISAVKRQLRIRTIHESKLYEFDNERHLGVFWVSCEAGTYIRTLCVHLGLLLGVGAHMQELRRVRSGAMSENEGMVTLHDVLDAQWLYDNQRDESYLRKVIKPLESLLTTYKRIVVKDSAVNAVCYGAKLMIPGLLRFEAGIELGEEVVLMTTKGEAIAIGIAQMSTVELSTCDHGVVAKVKRCIMERDLYPRRWGLGPVALEKKKLKSSGKLDKYGRANEATPAKWKSEYKDYSAPDGDSSQQAVDVVAKEEASPKEEPSLEANESKMDIDDAQDDEDKKKRKRHEGETPEERAERKRKKKEKKEKKERRKSKQEKDDSDDSD</sequence>
<protein>
    <recommendedName>
        <fullName evidence="5">H/ACA ribonucleoprotein complex subunit CBF5</fullName>
        <ecNumber evidence="1">5.4.99.-</ecNumber>
    </recommendedName>
    <alternativeName>
        <fullName>Centromere-binding factor 5</fullName>
    </alternativeName>
    <alternativeName>
        <fullName>H/ACA snoRNP protein CBF5</fullName>
    </alternativeName>
    <alternativeName>
        <fullName>Small nucleolar RNP protein CBF5</fullName>
    </alternativeName>
    <alternativeName>
        <fullName>rRNA pseudouridine synthase</fullName>
    </alternativeName>
</protein>
<gene>
    <name type="primary">cbf5</name>
    <name type="synonym">swoC</name>
    <name type="ORF">AN8851</name>
</gene>
<organism>
    <name type="scientific">Emericella nidulans (strain FGSC A4 / ATCC 38163 / CBS 112.46 / NRRL 194 / M139)</name>
    <name type="common">Aspergillus nidulans</name>
    <dbReference type="NCBI Taxonomy" id="227321"/>
    <lineage>
        <taxon>Eukaryota</taxon>
        <taxon>Fungi</taxon>
        <taxon>Dikarya</taxon>
        <taxon>Ascomycota</taxon>
        <taxon>Pezizomycotina</taxon>
        <taxon>Eurotiomycetes</taxon>
        <taxon>Eurotiomycetidae</taxon>
        <taxon>Eurotiales</taxon>
        <taxon>Aspergillaceae</taxon>
        <taxon>Aspergillus</taxon>
        <taxon>Aspergillus subgen. Nidulantes</taxon>
    </lineage>
</organism>
<comment type="function">
    <text evidence="1">Catalytic subunit of H/ACA small nucleolar ribonucleoprotein (H/ACA snoRNP) complex, which catalyzes pseudouridylation of rRNA. This involves the isomerization of uridine such that the ribose is subsequently attached to C5, instead of the normal N1. Pseudouridine ('psi') residues may serve to stabilize the conformation of rRNAs and play a central role in ribosomal RNA processing. The H/ACA snoRNP complex also mediates pseudouridylation of other types of RNAs. Catalyzes pseudouridylation at position 93 in U2 snRNA. Also catalyzes pseudouridylation of mRNAs; H/ACA-type snoRNAs probably guide pseudouridylation of mRNAs.</text>
</comment>
<comment type="catalytic activity">
    <reaction evidence="1">
        <text>uridine in 5S rRNA = pseudouridine in 5S rRNA</text>
        <dbReference type="Rhea" id="RHEA:47036"/>
        <dbReference type="Rhea" id="RHEA-COMP:11730"/>
        <dbReference type="Rhea" id="RHEA-COMP:11731"/>
        <dbReference type="ChEBI" id="CHEBI:65314"/>
        <dbReference type="ChEBI" id="CHEBI:65315"/>
    </reaction>
</comment>
<comment type="catalytic activity">
    <reaction evidence="1">
        <text>uridine in snRNA = pseudouridine in snRNA</text>
        <dbReference type="Rhea" id="RHEA:51124"/>
        <dbReference type="Rhea" id="RHEA-COMP:12891"/>
        <dbReference type="Rhea" id="RHEA-COMP:12892"/>
        <dbReference type="ChEBI" id="CHEBI:65314"/>
        <dbReference type="ChEBI" id="CHEBI:65315"/>
    </reaction>
</comment>
<comment type="catalytic activity">
    <reaction evidence="1">
        <text>a uridine in mRNA = a pseudouridine in mRNA</text>
        <dbReference type="Rhea" id="RHEA:56644"/>
        <dbReference type="Rhea" id="RHEA-COMP:14658"/>
        <dbReference type="Rhea" id="RHEA-COMP:14659"/>
        <dbReference type="ChEBI" id="CHEBI:65314"/>
        <dbReference type="ChEBI" id="CHEBI:65315"/>
    </reaction>
</comment>
<comment type="subunit">
    <text evidence="1">Component of the small nucleolar ribonucleoprotein particles containing H/ACA-type snoRNAs (H/ACA snoRNPs).</text>
</comment>
<comment type="subcellular location">
    <subcellularLocation>
        <location evidence="1">Nucleus</location>
        <location evidence="1">Nucleolus</location>
    </subcellularLocation>
</comment>
<comment type="similarity">
    <text evidence="5">Belongs to the pseudouridine synthase TruB family.</text>
</comment>
<comment type="sequence caution" evidence="5">
    <conflict type="erroneous gene model prediction">
        <sequence resource="EMBL-CDS" id="EAA60139"/>
    </conflict>
</comment>
<dbReference type="EC" id="5.4.99.-" evidence="1"/>
<dbReference type="EMBL" id="U59148">
    <property type="protein sequence ID" value="AAB94296.1"/>
    <property type="molecule type" value="mRNA"/>
</dbReference>
<dbReference type="EMBL" id="AY057454">
    <property type="protein sequence ID" value="AAL23694.1"/>
    <property type="molecule type" value="Genomic_DNA"/>
</dbReference>
<dbReference type="EMBL" id="AACD01000163">
    <property type="protein sequence ID" value="EAA60139.1"/>
    <property type="status" value="ALT_SEQ"/>
    <property type="molecule type" value="Genomic_DNA"/>
</dbReference>
<dbReference type="EMBL" id="BN001303">
    <property type="protein sequence ID" value="CBF77883.1"/>
    <property type="molecule type" value="Genomic_DNA"/>
</dbReference>
<dbReference type="RefSeq" id="XP_682120.1">
    <property type="nucleotide sequence ID" value="XM_677028.1"/>
</dbReference>
<dbReference type="SMR" id="O43100"/>
<dbReference type="FunCoup" id="O43100">
    <property type="interactions" value="1506"/>
</dbReference>
<dbReference type="STRING" id="227321.O43100"/>
<dbReference type="EnsemblFungi" id="CBF77883">
    <property type="protein sequence ID" value="CBF77883"/>
    <property type="gene ID" value="ANIA_08851"/>
</dbReference>
<dbReference type="VEuPathDB" id="FungiDB:AN8851"/>
<dbReference type="eggNOG" id="KOG2529">
    <property type="taxonomic scope" value="Eukaryota"/>
</dbReference>
<dbReference type="HOGENOM" id="CLU_032087_3_2_1"/>
<dbReference type="InParanoid" id="O43100"/>
<dbReference type="OMA" id="KYGRTNE"/>
<dbReference type="OrthoDB" id="10250002at2759"/>
<dbReference type="Proteomes" id="UP000000560">
    <property type="component" value="Chromosome III"/>
</dbReference>
<dbReference type="GO" id="GO:0031429">
    <property type="term" value="C:box H/ACA snoRNP complex"/>
    <property type="evidence" value="ECO:0000318"/>
    <property type="project" value="GO_Central"/>
</dbReference>
<dbReference type="GO" id="GO:0005874">
    <property type="term" value="C:microtubule"/>
    <property type="evidence" value="ECO:0007669"/>
    <property type="project" value="UniProtKB-KW"/>
</dbReference>
<dbReference type="GO" id="GO:0003677">
    <property type="term" value="F:DNA binding"/>
    <property type="evidence" value="ECO:0007669"/>
    <property type="project" value="UniProtKB-KW"/>
</dbReference>
<dbReference type="GO" id="GO:0009982">
    <property type="term" value="F:pseudouridine synthase activity"/>
    <property type="evidence" value="ECO:0000318"/>
    <property type="project" value="GO_Central"/>
</dbReference>
<dbReference type="GO" id="GO:0004730">
    <property type="term" value="F:pseudouridylate synthase activity"/>
    <property type="evidence" value="ECO:0000247"/>
    <property type="project" value="AspGD"/>
</dbReference>
<dbReference type="GO" id="GO:0003723">
    <property type="term" value="F:RNA binding"/>
    <property type="evidence" value="ECO:0007669"/>
    <property type="project" value="UniProtKB-KW"/>
</dbReference>
<dbReference type="GO" id="GO:0106032">
    <property type="term" value="F:snRNA pseudouridine synthase activity"/>
    <property type="evidence" value="ECO:0007669"/>
    <property type="project" value="RHEA"/>
</dbReference>
<dbReference type="GO" id="GO:0051211">
    <property type="term" value="P:anisotropic cell growth"/>
    <property type="evidence" value="ECO:0000315"/>
    <property type="project" value="AspGD"/>
</dbReference>
<dbReference type="GO" id="GO:0000495">
    <property type="term" value="P:box H/ACA sno(s)RNA 3'-end processing"/>
    <property type="evidence" value="ECO:0000318"/>
    <property type="project" value="GO_Central"/>
</dbReference>
<dbReference type="GO" id="GO:0048315">
    <property type="term" value="P:conidium formation"/>
    <property type="evidence" value="ECO:0000315"/>
    <property type="project" value="AspGD"/>
</dbReference>
<dbReference type="GO" id="GO:0006897">
    <property type="term" value="P:endocytosis"/>
    <property type="evidence" value="ECO:0000315"/>
    <property type="project" value="AspGD"/>
</dbReference>
<dbReference type="GO" id="GO:0030010">
    <property type="term" value="P:establishment of cell polarity"/>
    <property type="evidence" value="ECO:0000315"/>
    <property type="project" value="AspGD"/>
</dbReference>
<dbReference type="GO" id="GO:1990481">
    <property type="term" value="P:mRNA pseudouridine synthesis"/>
    <property type="evidence" value="ECO:0000318"/>
    <property type="project" value="GO_Central"/>
</dbReference>
<dbReference type="GO" id="GO:0031118">
    <property type="term" value="P:rRNA pseudouridine synthesis"/>
    <property type="evidence" value="ECO:0000318"/>
    <property type="project" value="GO_Central"/>
</dbReference>
<dbReference type="GO" id="GO:0031120">
    <property type="term" value="P:snRNA pseudouridine synthesis"/>
    <property type="evidence" value="ECO:0000318"/>
    <property type="project" value="GO_Central"/>
</dbReference>
<dbReference type="CDD" id="cd02572">
    <property type="entry name" value="PseudoU_synth_hDyskerin"/>
    <property type="match status" value="1"/>
</dbReference>
<dbReference type="CDD" id="cd21148">
    <property type="entry name" value="PUA_Cbf5"/>
    <property type="match status" value="1"/>
</dbReference>
<dbReference type="FunFam" id="3.30.2350.10:FF:000001">
    <property type="entry name" value="H/ACA ribonucleoprotein complex subunit CBF5"/>
    <property type="match status" value="1"/>
</dbReference>
<dbReference type="Gene3D" id="3.30.2350.10">
    <property type="entry name" value="Pseudouridine synthase"/>
    <property type="match status" value="1"/>
</dbReference>
<dbReference type="Gene3D" id="2.30.130.10">
    <property type="entry name" value="PUA domain"/>
    <property type="match status" value="1"/>
</dbReference>
<dbReference type="InterPro" id="IPR012960">
    <property type="entry name" value="Dyskerin-like"/>
</dbReference>
<dbReference type="InterPro" id="IPR020103">
    <property type="entry name" value="PsdUridine_synth_cat_dom_sf"/>
</dbReference>
<dbReference type="InterPro" id="IPR002501">
    <property type="entry name" value="PsdUridine_synth_N"/>
</dbReference>
<dbReference type="InterPro" id="IPR002478">
    <property type="entry name" value="PUA"/>
</dbReference>
<dbReference type="InterPro" id="IPR015947">
    <property type="entry name" value="PUA-like_sf"/>
</dbReference>
<dbReference type="InterPro" id="IPR036974">
    <property type="entry name" value="PUA_sf"/>
</dbReference>
<dbReference type="InterPro" id="IPR004802">
    <property type="entry name" value="tRNA_PsdUridine_synth_B_fam"/>
</dbReference>
<dbReference type="InterPro" id="IPR032819">
    <property type="entry name" value="TruB_C"/>
</dbReference>
<dbReference type="InterPro" id="IPR004521">
    <property type="entry name" value="Uncharacterised_CHP00451"/>
</dbReference>
<dbReference type="NCBIfam" id="TIGR00425">
    <property type="entry name" value="CBF5"/>
    <property type="match status" value="1"/>
</dbReference>
<dbReference type="NCBIfam" id="NF003280">
    <property type="entry name" value="PRK04270.1"/>
    <property type="match status" value="1"/>
</dbReference>
<dbReference type="NCBIfam" id="TIGR00451">
    <property type="entry name" value="unchar_dom_2"/>
    <property type="match status" value="1"/>
</dbReference>
<dbReference type="PANTHER" id="PTHR23127">
    <property type="entry name" value="CENTROMERE/MICROTUBULE BINDING PROTEIN CBF5"/>
    <property type="match status" value="1"/>
</dbReference>
<dbReference type="PANTHER" id="PTHR23127:SF0">
    <property type="entry name" value="H_ACA RIBONUCLEOPROTEIN COMPLEX SUBUNIT DKC1"/>
    <property type="match status" value="1"/>
</dbReference>
<dbReference type="Pfam" id="PF08068">
    <property type="entry name" value="DKCLD"/>
    <property type="match status" value="1"/>
</dbReference>
<dbReference type="Pfam" id="PF01472">
    <property type="entry name" value="PUA"/>
    <property type="match status" value="1"/>
</dbReference>
<dbReference type="Pfam" id="PF16198">
    <property type="entry name" value="TruB_C_2"/>
    <property type="match status" value="1"/>
</dbReference>
<dbReference type="Pfam" id="PF01509">
    <property type="entry name" value="TruB_N"/>
    <property type="match status" value="1"/>
</dbReference>
<dbReference type="SMART" id="SM01136">
    <property type="entry name" value="DKCLD"/>
    <property type="match status" value="1"/>
</dbReference>
<dbReference type="SMART" id="SM00359">
    <property type="entry name" value="PUA"/>
    <property type="match status" value="1"/>
</dbReference>
<dbReference type="SUPFAM" id="SSF55120">
    <property type="entry name" value="Pseudouridine synthase"/>
    <property type="match status" value="1"/>
</dbReference>
<dbReference type="SUPFAM" id="SSF88697">
    <property type="entry name" value="PUA domain-like"/>
    <property type="match status" value="1"/>
</dbReference>
<dbReference type="PROSITE" id="PS50890">
    <property type="entry name" value="PUA"/>
    <property type="match status" value="1"/>
</dbReference>
<evidence type="ECO:0000250" key="1">
    <source>
        <dbReference type="UniProtKB" id="P33322"/>
    </source>
</evidence>
<evidence type="ECO:0000250" key="2">
    <source>
        <dbReference type="UniProtKB" id="P60340"/>
    </source>
</evidence>
<evidence type="ECO:0000255" key="3">
    <source>
        <dbReference type="PROSITE-ProRule" id="PRU00161"/>
    </source>
</evidence>
<evidence type="ECO:0000256" key="4">
    <source>
        <dbReference type="SAM" id="MobiDB-lite"/>
    </source>
</evidence>
<evidence type="ECO:0000305" key="5"/>
<keyword id="KW-0238">DNA-binding</keyword>
<keyword id="KW-0413">Isomerase</keyword>
<keyword id="KW-0493">Microtubule</keyword>
<keyword id="KW-0539">Nucleus</keyword>
<keyword id="KW-1185">Reference proteome</keyword>
<keyword id="KW-0677">Repeat</keyword>
<keyword id="KW-0687">Ribonucleoprotein</keyword>
<keyword id="KW-0690">Ribosome biogenesis</keyword>
<keyword id="KW-0694">RNA-binding</keyword>
<keyword id="KW-0698">rRNA processing</keyword>
<name>CBF5_EMENI</name>